<evidence type="ECO:0000256" key="1">
    <source>
        <dbReference type="SAM" id="MobiDB-lite"/>
    </source>
</evidence>
<evidence type="ECO:0000305" key="2"/>
<keyword id="KW-0270">Exopolysaccharide synthesis</keyword>
<keyword id="KW-1185">Reference proteome</keyword>
<keyword id="KW-0808">Transferase</keyword>
<organism>
    <name type="scientific">Mycobacterium leprae (strain TN)</name>
    <dbReference type="NCBI Taxonomy" id="272631"/>
    <lineage>
        <taxon>Bacteria</taxon>
        <taxon>Bacillati</taxon>
        <taxon>Actinomycetota</taxon>
        <taxon>Actinomycetes</taxon>
        <taxon>Mycobacteriales</taxon>
        <taxon>Mycobacteriaceae</taxon>
        <taxon>Mycobacterium</taxon>
    </lineage>
</organism>
<protein>
    <recommendedName>
        <fullName>Exopolysaccharide phosphotransferase CpsY</fullName>
        <ecNumber>2.7.-.-</ecNumber>
    </recommendedName>
    <alternativeName>
        <fullName>Stealth protein CpsY</fullName>
    </alternativeName>
</protein>
<comment type="miscellaneous">
    <text>Stealth proteins are part of a protein family that is conserved from bacteria to higher eukaryotes. Family members were first identified in microbes as proteins that help pathogens to elude the host innate immune system. Microbial stealth proteins are involved in the biosynthesis of exopolysaccharides. Stealth proteins are predicted to function as hexose-1-phosphoryltransferases.</text>
</comment>
<comment type="similarity">
    <text evidence="2">Belongs to the stealth family.</text>
</comment>
<reference key="1">
    <citation type="journal article" date="2001" name="Nature">
        <title>Massive gene decay in the leprosy bacillus.</title>
        <authorList>
            <person name="Cole S.T."/>
            <person name="Eiglmeier K."/>
            <person name="Parkhill J."/>
            <person name="James K.D."/>
            <person name="Thomson N.R."/>
            <person name="Wheeler P.R."/>
            <person name="Honore N."/>
            <person name="Garnier T."/>
            <person name="Churcher C.M."/>
            <person name="Harris D.E."/>
            <person name="Mungall K.L."/>
            <person name="Basham D."/>
            <person name="Brown D."/>
            <person name="Chillingworth T."/>
            <person name="Connor R."/>
            <person name="Davies R.M."/>
            <person name="Devlin K."/>
            <person name="Duthoy S."/>
            <person name="Feltwell T."/>
            <person name="Fraser A."/>
            <person name="Hamlin N."/>
            <person name="Holroyd S."/>
            <person name="Hornsby T."/>
            <person name="Jagels K."/>
            <person name="Lacroix C."/>
            <person name="Maclean J."/>
            <person name="Moule S."/>
            <person name="Murphy L.D."/>
            <person name="Oliver K."/>
            <person name="Quail M.A."/>
            <person name="Rajandream M.A."/>
            <person name="Rutherford K.M."/>
            <person name="Rutter S."/>
            <person name="Seeger K."/>
            <person name="Simon S."/>
            <person name="Simmonds M."/>
            <person name="Skelton J."/>
            <person name="Squares R."/>
            <person name="Squares S."/>
            <person name="Stevens K."/>
            <person name="Taylor K."/>
            <person name="Whitehead S."/>
            <person name="Woodward J.R."/>
            <person name="Barrell B.G."/>
        </authorList>
    </citation>
    <scope>NUCLEOTIDE SEQUENCE [LARGE SCALE GENOMIC DNA]</scope>
    <source>
        <strain>TN</strain>
    </source>
</reference>
<reference key="2">
    <citation type="journal article" date="2005" name="PLoS Comput. Biol.">
        <title>Stealth proteins: in silico identification of a novel protein family rendering bacterial pathogens invisible to host immune defense.</title>
        <authorList>
            <person name="Sperisen P."/>
            <person name="Schmid C.D."/>
            <person name="Bucher P."/>
            <person name="Zilian O."/>
        </authorList>
    </citation>
    <scope>IDENTIFICATION AS A STEALTH PROTEIN</scope>
    <scope>PREDICTION OF FUNCTION</scope>
</reference>
<gene>
    <name type="primary">cpsY</name>
    <name type="ordered locus">ML2209</name>
    <name type="ORF">MLCB5.32c</name>
</gene>
<name>CPSY_MYCLE</name>
<accession>Q50025</accession>
<accession>O08112</accession>
<proteinExistence type="inferred from homology"/>
<dbReference type="EC" id="2.7.-.-"/>
<dbReference type="EMBL" id="U15182">
    <property type="protein sequence ID" value="AAA62996.1"/>
    <property type="molecule type" value="Genomic_DNA"/>
</dbReference>
<dbReference type="EMBL" id="Z95151">
    <property type="protein sequence ID" value="CAB08405.1"/>
    <property type="molecule type" value="Genomic_DNA"/>
</dbReference>
<dbReference type="EMBL" id="AL583924">
    <property type="protein sequence ID" value="CAC31164.1"/>
    <property type="molecule type" value="Genomic_DNA"/>
</dbReference>
<dbReference type="PIR" id="D87185">
    <property type="entry name" value="D87185"/>
</dbReference>
<dbReference type="RefSeq" id="NP_302449.1">
    <property type="nucleotide sequence ID" value="NC_002677.1"/>
</dbReference>
<dbReference type="RefSeq" id="WP_010908769.1">
    <property type="nucleotide sequence ID" value="NC_002677.1"/>
</dbReference>
<dbReference type="SMR" id="Q50025"/>
<dbReference type="STRING" id="272631.gene:17576066"/>
<dbReference type="KEGG" id="mle:ML2209"/>
<dbReference type="PATRIC" id="fig|272631.5.peg.4184"/>
<dbReference type="Leproma" id="ML2209"/>
<dbReference type="eggNOG" id="COG0438">
    <property type="taxonomic scope" value="Bacteria"/>
</dbReference>
<dbReference type="HOGENOM" id="CLU_033996_0_0_11"/>
<dbReference type="OrthoDB" id="9776077at2"/>
<dbReference type="Proteomes" id="UP000000806">
    <property type="component" value="Chromosome"/>
</dbReference>
<dbReference type="GO" id="GO:0016772">
    <property type="term" value="F:transferase activity, transferring phosphorus-containing groups"/>
    <property type="evidence" value="ECO:0007669"/>
    <property type="project" value="InterPro"/>
</dbReference>
<dbReference type="GO" id="GO:0000271">
    <property type="term" value="P:polysaccharide biosynthetic process"/>
    <property type="evidence" value="ECO:0007669"/>
    <property type="project" value="UniProtKB-KW"/>
</dbReference>
<dbReference type="InterPro" id="IPR047141">
    <property type="entry name" value="Stealth"/>
</dbReference>
<dbReference type="InterPro" id="IPR031358">
    <property type="entry name" value="Stealth_CR1"/>
</dbReference>
<dbReference type="InterPro" id="IPR021520">
    <property type="entry name" value="Stealth_CR2"/>
</dbReference>
<dbReference type="InterPro" id="IPR031357">
    <property type="entry name" value="Stealth_CR3"/>
</dbReference>
<dbReference type="InterPro" id="IPR031356">
    <property type="entry name" value="Stealth_CR4"/>
</dbReference>
<dbReference type="PANTHER" id="PTHR24045">
    <property type="match status" value="1"/>
</dbReference>
<dbReference type="PANTHER" id="PTHR24045:SF0">
    <property type="entry name" value="N-ACETYLGLUCOSAMINE-1-PHOSPHOTRANSFERASE SUBUNITS ALPHA_BETA"/>
    <property type="match status" value="1"/>
</dbReference>
<dbReference type="Pfam" id="PF17101">
    <property type="entry name" value="Stealth_CR1"/>
    <property type="match status" value="1"/>
</dbReference>
<dbReference type="Pfam" id="PF11380">
    <property type="entry name" value="Stealth_CR2"/>
    <property type="match status" value="1"/>
</dbReference>
<dbReference type="Pfam" id="PF17102">
    <property type="entry name" value="Stealth_CR3"/>
    <property type="match status" value="1"/>
</dbReference>
<dbReference type="Pfam" id="PF17103">
    <property type="entry name" value="Stealth_CR4"/>
    <property type="match status" value="1"/>
</dbReference>
<sequence>MSKIVSCEDDRPVRRTLEPIIVTRQGKVARLESSLTPHEAQIEDLIFLRKALNRADIPFLFIRNHKNRPVLAINIKLRPAVERALVTACASEPMYAKTIDERGLSPVLVAKGQLSQSIDPRIVRLYRRRIAPGGFRFGSRFGVELQFWSFEETLIRCPVENSLTRKVLPRKEVTPATIKLYGYKWHTIEGMFTPHASDVTFDIDLVFSWVDGSDPEFRARRAAEMSHHVVGEGDDADARIRQIDELKYALRSVNMFAPWIRRIFIATDSIPPSWLADHPMITIVPAEDHFSDRSALPTYNSHAVESQLHRIPDLSEHFLYSNDDMFFGRPLKASMFFSPGGVTRFIEAKTRIGLGTNDPTRSGFENAARVNRQLLLRRFGQLITRHLEHTTVPLRKSVLFEMEQEFPEEFARTQESVFRSGTDISVTNSLYHYYALITGRAVQQEKAKVLYVDTTSYTGLNLLPELRKRRNYDFFCLNDGSFPEVPATERAERVVSFLERYFPIPAPWEKVATDFNRQDFASPTVSAPLEDGQTANPAQTAR</sequence>
<feature type="chain" id="PRO_0000235948" description="Exopolysaccharide phosphotransferase CpsY">
    <location>
        <begin position="1"/>
        <end position="542"/>
    </location>
</feature>
<feature type="region of interest" description="Disordered" evidence="1">
    <location>
        <begin position="522"/>
        <end position="542"/>
    </location>
</feature>
<feature type="compositionally biased region" description="Polar residues" evidence="1">
    <location>
        <begin position="533"/>
        <end position="542"/>
    </location>
</feature>